<dbReference type="PDB" id="6E5M">
    <property type="method" value="X-ray"/>
    <property type="resolution" value="1.61 A"/>
    <property type="chains" value="I=22-30"/>
</dbReference>
<dbReference type="PDB" id="6EAT">
    <property type="method" value="X-ray"/>
    <property type="resolution" value="1.15 A"/>
    <property type="chains" value="I=22-30"/>
</dbReference>
<dbReference type="PDBsum" id="6E5M"/>
<dbReference type="PDBsum" id="6EAT"/>
<dbReference type="SMR" id="Q9S9E3"/>
<dbReference type="GO" id="GO:0005576">
    <property type="term" value="C:extracellular region"/>
    <property type="evidence" value="ECO:0007669"/>
    <property type="project" value="InterPro"/>
</dbReference>
<dbReference type="GO" id="GO:0004867">
    <property type="term" value="F:serine-type endopeptidase inhibitor activity"/>
    <property type="evidence" value="ECO:0007669"/>
    <property type="project" value="UniProtKB-KW"/>
</dbReference>
<dbReference type="CDD" id="cd00023">
    <property type="entry name" value="BBI"/>
    <property type="match status" value="1"/>
</dbReference>
<dbReference type="FunFam" id="2.10.69.10:FF:000001">
    <property type="entry name" value="Bowman-Birk type proteinase inhibitor"/>
    <property type="match status" value="1"/>
</dbReference>
<dbReference type="Gene3D" id="2.10.69.10">
    <property type="entry name" value="Cysteine Protease (Bromelain) Inhibitor, subunit H"/>
    <property type="match status" value="1"/>
</dbReference>
<dbReference type="InterPro" id="IPR035995">
    <property type="entry name" value="Bowman-Birk_prot_inh"/>
</dbReference>
<dbReference type="InterPro" id="IPR000877">
    <property type="entry name" value="Prot_inh_BBI"/>
</dbReference>
<dbReference type="Pfam" id="PF00228">
    <property type="entry name" value="Bowman-Birk_leg"/>
    <property type="match status" value="2"/>
</dbReference>
<dbReference type="SMART" id="SM00269">
    <property type="entry name" value="BowB"/>
    <property type="match status" value="1"/>
</dbReference>
<dbReference type="SUPFAM" id="SSF57247">
    <property type="entry name" value="Bowman-Birk inhibitor, BBI"/>
    <property type="match status" value="1"/>
</dbReference>
<dbReference type="PROSITE" id="PS00281">
    <property type="entry name" value="BOWMAN_BIRK"/>
    <property type="match status" value="1"/>
</dbReference>
<reference evidence="11" key="1">
    <citation type="journal article" date="1996" name="J. Mol. Evol.">
        <title>Analysis of the amino acid sequences of plant Bowman-Birk inhibitors.</title>
        <authorList>
            <person name="Prakash B."/>
            <person name="Selvaraj S."/>
            <person name="Murthy M.R.N."/>
            <person name="Sreerama Y.N."/>
            <person name="Rao D.R."/>
            <person name="Gowda L.R."/>
        </authorList>
    </citation>
    <scope>PROTEIN SEQUENCE</scope>
    <scope>IDENTIFICATION BY MASS SPECTROMETRY</scope>
    <source>
        <tissue evidence="5">Seed</tissue>
    </source>
</reference>
<reference evidence="11" key="2">
    <citation type="journal article" date="1997" name="Biochim. Biophys. Acta">
        <title>Antigenic determinants and reactive sites of a trypsin/chymotrypsin double-headed inhibitor from horse gram (Dolichos biflorus).</title>
        <authorList>
            <person name="Sreerama Y.N."/>
            <person name="Gowda L.R."/>
        </authorList>
    </citation>
    <scope>PROTEIN SEQUENCE</scope>
    <scope>REACTIVE SITES</scope>
    <source>
        <tissue evidence="6">Seed</tissue>
    </source>
</reference>
<reference evidence="11" key="3">
    <citation type="journal article" date="2004" name="J. Biol. Chem.">
        <title>Molecular mechanism of dimerization of Bowman-Birk inhibitors: pivotal role of Asp76 in the dimerization.</title>
        <authorList>
            <person name="Kumar P."/>
            <person name="Roa A.G.A."/>
            <person name="Hariharaputran S."/>
            <person name="Chandra N."/>
            <person name="Gowda L.R."/>
        </authorList>
    </citation>
    <scope>PROTEIN SEQUENCE (HGI-III; HGGI-I; HGGI-II AND HGGI-III)</scope>
    <scope>SUBUNIT</scope>
    <scope>VARIANT ALA-21</scope>
    <source>
        <tissue evidence="4">Seed</tissue>
    </source>
</reference>
<reference evidence="11" key="4">
    <citation type="journal article" date="1997" name="J. Food Biochem.">
        <title>Double-headed trypsin/chymotrypsin inhibitors from horse gram (Dolichos biflorus): purification, molecular and kinetic properties.</title>
        <authorList>
            <person name="Sreerama Y.N."/>
            <person name="Das J.R."/>
            <person name="Rao D.R."/>
            <person name="Gowda L.R."/>
        </authorList>
        <dbReference type="AGRICOLA" id="IND21240931"/>
    </citation>
    <scope>PROTEIN SEQUENCE OF 1-21</scope>
    <scope>FUNCTION</scope>
    <scope>SUBUNIT</scope>
    <scope>MASS SPECTROMETRY</scope>
    <source>
        <tissue evidence="7">Seed</tissue>
    </source>
</reference>
<reference evidence="11" key="5">
    <citation type="journal article" date="2002" name="Phytochemistry">
        <title>Formation of Bowman-Birk inhibitors during the germination of horsegram (Dolichos biflorus).</title>
        <authorList>
            <person name="Kumar P."/>
            <person name="Sreerama Y.N."/>
            <person name="Gowda L.R."/>
        </authorList>
    </citation>
    <scope>PARTIAL PROTEIN SEQUENCE (HGGI-I; HGGI-II AND HGGI-III)</scope>
    <scope>FUNCTION</scope>
    <scope>DEVELOPMENTAL STAGE</scope>
    <scope>MASS SPECTROMETRY</scope>
    <source>
        <tissue evidence="3">Seed</tissue>
    </source>
</reference>
<reference evidence="11" key="6">
    <citation type="journal article" date="1998" name="J. Agric. Food Chem.">
        <title>Bowman-Birk type proteinase inhibitor profiles of horse gram (Dolichos biflorus) during germintation and seed development.</title>
        <authorList>
            <person name="Sreerama Y.N."/>
            <person name="Gowda L.R."/>
        </authorList>
    </citation>
    <scope>DEVELOPMENTAL STAGE</scope>
    <source>
        <tissue evidence="8">Seed</tissue>
    </source>
</reference>
<comment type="function">
    <text evidence="3 7">Inhibitors of trypsin and chymotrypsin. HGGI-III has a higher activity than HGGI-I or HGGI-II.</text>
</comment>
<comment type="subunit">
    <text evidence="4 7">HGI-III exists in a state of equilibrium between monomer, homodimer and trimer, with homodimer being the predominant form. The homodimer is stabilized by the non-covalent interaction between Lys-24 of one subunit and Asp-76 of the other subunit. The homodimer is more thermostable than the monomer. HGGI-I, HGGI-II and HGGI-III exist as monomers.</text>
</comment>
<comment type="developmental stage">
    <text evidence="3 8">HGI-III is expressed before germination. HGGI-I, HGGI-II and HGGI-III are expressed after germination.</text>
</comment>
<comment type="PTM">
    <text evidence="9 10">HGGI-I, HGGI-II and HGGI-III are produced by proteolysis of the N- and C-termini of HGI-III.</text>
</comment>
<comment type="mass spectrometry">
    <molecule>Horsegram inhibitor 1</molecule>
</comment>
<comment type="mass spectrometry">
    <molecule>Horsegram germinated inhibitor 1</molecule>
</comment>
<comment type="mass spectrometry">
    <molecule>Horsegram germinated inhibitor 2</molecule>
</comment>
<comment type="mass spectrometry">
    <molecule>Horsegram germinated inhibitor 3</molecule>
</comment>
<comment type="similarity">
    <text evidence="2">Belongs to the Bowman-Birk serine protease inhibitor family.</text>
</comment>
<proteinExistence type="evidence at protein level"/>
<name>IBB_VIGUC</name>
<feature type="chain" id="PRO_0000003264" description="Horsegram inhibitor 1">
    <location>
        <begin position="1"/>
        <end position="76"/>
    </location>
</feature>
<feature type="chain" id="PRO_0000003265" description="Horsegram germinated inhibitor 1">
    <location>
        <begin position="7"/>
        <end position="72"/>
    </location>
</feature>
<feature type="chain" id="PRO_0000003266" description="Horsegram germinated inhibitor 2">
    <location>
        <begin position="8"/>
        <end position="72"/>
    </location>
</feature>
<feature type="chain" id="PRO_0000003267" description="Horsegram germinated inhibitor 3">
    <location>
        <begin position="13"/>
        <end position="72"/>
    </location>
</feature>
<feature type="site" description="Reactive bond for trypsin">
    <location>
        <begin position="24"/>
        <end position="25"/>
    </location>
</feature>
<feature type="site" description="Reactive bond for chymotrypsin">
    <location>
        <begin position="51"/>
        <end position="52"/>
    </location>
</feature>
<feature type="disulfide bond" evidence="1">
    <location>
        <begin position="16"/>
        <end position="70"/>
    </location>
</feature>
<feature type="disulfide bond" evidence="1">
    <location>
        <begin position="17"/>
        <end position="32"/>
    </location>
</feature>
<feature type="disulfide bond" evidence="1">
    <location>
        <begin position="20"/>
        <end position="66"/>
    </location>
</feature>
<feature type="disulfide bond" evidence="1">
    <location>
        <begin position="22"/>
        <end position="30"/>
    </location>
</feature>
<feature type="disulfide bond" evidence="1">
    <location>
        <begin position="40"/>
        <end position="47"/>
    </location>
</feature>
<feature type="disulfide bond" evidence="1">
    <location>
        <begin position="44"/>
        <end position="59"/>
    </location>
</feature>
<feature type="disulfide bond" evidence="1">
    <location>
        <begin position="49"/>
        <end position="57"/>
    </location>
</feature>
<feature type="sequence variant" description="In HGGI-I, HGGI-II and HGGI-III." evidence="4">
    <original>T</original>
    <variation>A</variation>
    <location>
        <position position="21"/>
    </location>
</feature>
<feature type="strand" evidence="12">
    <location>
        <begin position="23"/>
        <end position="27"/>
    </location>
</feature>
<organism>
    <name type="scientific">Vigna unguiculata subsp. cylindrica</name>
    <name type="common">Horse gram</name>
    <name type="synonym">Dolichos biflorus</name>
    <dbReference type="NCBI Taxonomy" id="3091605"/>
    <lineage>
        <taxon>Eukaryota</taxon>
        <taxon>Viridiplantae</taxon>
        <taxon>Streptophyta</taxon>
        <taxon>Embryophyta</taxon>
        <taxon>Tracheophyta</taxon>
        <taxon>Spermatophyta</taxon>
        <taxon>Magnoliopsida</taxon>
        <taxon>eudicotyledons</taxon>
        <taxon>Gunneridae</taxon>
        <taxon>Pentapetalae</taxon>
        <taxon>rosids</taxon>
        <taxon>fabids</taxon>
        <taxon>Fabales</taxon>
        <taxon>Fabaceae</taxon>
        <taxon>Papilionoideae</taxon>
        <taxon>50 kb inversion clade</taxon>
        <taxon>NPAAA clade</taxon>
        <taxon>indigoferoid/millettioid clade</taxon>
        <taxon>Phaseoleae</taxon>
        <taxon>Vigna</taxon>
    </lineage>
</organism>
<sequence>DHHQSTDEPSESSKPCCDQCTCTKSIPPQCRCTDVRLNSCHSACSSCVCTFSIPAQCVCVDMKDFCYAPCKSSHDD</sequence>
<accession>Q9S9E3</accession>
<protein>
    <recommendedName>
        <fullName>Horsegram inhibitor 1</fullName>
    </recommendedName>
    <alternativeName>
        <fullName>Bowman-Birk type proteinase inhibitor HGI-I</fullName>
    </alternativeName>
    <alternativeName>
        <fullName>Horsegram inhibitor I</fullName>
    </alternativeName>
    <component>
        <recommendedName>
            <fullName>Horsegram germinated inhibitor 1</fullName>
        </recommendedName>
        <alternativeName>
            <fullName>Horsegram germinated inhibitor I</fullName>
            <shortName>HGGI-I</shortName>
        </alternativeName>
    </component>
    <component>
        <recommendedName>
            <fullName>Horsegram germinated inhibitor 2</fullName>
        </recommendedName>
        <alternativeName>
            <fullName>Horsegram germinated inhibitor II</fullName>
            <shortName>HGGI-II</shortName>
        </alternativeName>
    </component>
    <component>
        <recommendedName>
            <fullName>Horsegram germinated inhibitor 3</fullName>
        </recommendedName>
        <alternativeName>
            <fullName>Horsegram germinated inhibitor III</fullName>
            <shortName>HGGI-III</shortName>
        </alternativeName>
    </component>
</protein>
<evidence type="ECO:0000250" key="1">
    <source>
        <dbReference type="UniProtKB" id="P01058"/>
    </source>
</evidence>
<evidence type="ECO:0000255" key="2"/>
<evidence type="ECO:0000269" key="3">
    <source>
    </source>
</evidence>
<evidence type="ECO:0000269" key="4">
    <source>
    </source>
</evidence>
<evidence type="ECO:0000269" key="5">
    <source>
    </source>
</evidence>
<evidence type="ECO:0000269" key="6">
    <source>
    </source>
</evidence>
<evidence type="ECO:0000269" key="7">
    <source ref="4"/>
</evidence>
<evidence type="ECO:0000269" key="8">
    <source ref="6"/>
</evidence>
<evidence type="ECO:0000303" key="9">
    <source>
    </source>
</evidence>
<evidence type="ECO:0000303" key="10">
    <source ref="6"/>
</evidence>
<evidence type="ECO:0000305" key="11"/>
<evidence type="ECO:0007829" key="12">
    <source>
        <dbReference type="PDB" id="6EAT"/>
    </source>
</evidence>
<keyword id="KW-0002">3D-structure</keyword>
<keyword id="KW-0903">Direct protein sequencing</keyword>
<keyword id="KW-1015">Disulfide bond</keyword>
<keyword id="KW-0646">Protease inhibitor</keyword>
<keyword id="KW-0722">Serine protease inhibitor</keyword>